<dbReference type="EC" id="3.4.21.92" evidence="1"/>
<dbReference type="EMBL" id="CP000439">
    <property type="protein sequence ID" value="ABK89944.1"/>
    <property type="molecule type" value="Genomic_DNA"/>
</dbReference>
<dbReference type="RefSeq" id="WP_003015534.1">
    <property type="nucleotide sequence ID" value="NZ_CP009633.1"/>
</dbReference>
<dbReference type="SMR" id="A0Q6S9"/>
<dbReference type="MEROPS" id="S14.001"/>
<dbReference type="GeneID" id="75265209"/>
<dbReference type="KEGG" id="ftn:FTN_1057"/>
<dbReference type="KEGG" id="ftx:AW25_951"/>
<dbReference type="BioCyc" id="FTUL401614:G1G75-1100-MONOMER"/>
<dbReference type="Proteomes" id="UP000000762">
    <property type="component" value="Chromosome"/>
</dbReference>
<dbReference type="GO" id="GO:0005737">
    <property type="term" value="C:cytoplasm"/>
    <property type="evidence" value="ECO:0007669"/>
    <property type="project" value="UniProtKB-SubCell"/>
</dbReference>
<dbReference type="GO" id="GO:0009368">
    <property type="term" value="C:endopeptidase Clp complex"/>
    <property type="evidence" value="ECO:0007669"/>
    <property type="project" value="TreeGrafter"/>
</dbReference>
<dbReference type="GO" id="GO:0004176">
    <property type="term" value="F:ATP-dependent peptidase activity"/>
    <property type="evidence" value="ECO:0007669"/>
    <property type="project" value="InterPro"/>
</dbReference>
<dbReference type="GO" id="GO:0051117">
    <property type="term" value="F:ATPase binding"/>
    <property type="evidence" value="ECO:0007669"/>
    <property type="project" value="TreeGrafter"/>
</dbReference>
<dbReference type="GO" id="GO:0004252">
    <property type="term" value="F:serine-type endopeptidase activity"/>
    <property type="evidence" value="ECO:0007669"/>
    <property type="project" value="UniProtKB-UniRule"/>
</dbReference>
<dbReference type="GO" id="GO:0006515">
    <property type="term" value="P:protein quality control for misfolded or incompletely synthesized proteins"/>
    <property type="evidence" value="ECO:0007669"/>
    <property type="project" value="TreeGrafter"/>
</dbReference>
<dbReference type="CDD" id="cd07017">
    <property type="entry name" value="S14_ClpP_2"/>
    <property type="match status" value="1"/>
</dbReference>
<dbReference type="FunFam" id="3.90.226.10:FF:000001">
    <property type="entry name" value="ATP-dependent Clp protease proteolytic subunit"/>
    <property type="match status" value="1"/>
</dbReference>
<dbReference type="Gene3D" id="3.90.226.10">
    <property type="entry name" value="2-enoyl-CoA Hydratase, Chain A, domain 1"/>
    <property type="match status" value="1"/>
</dbReference>
<dbReference type="HAMAP" id="MF_00444">
    <property type="entry name" value="ClpP"/>
    <property type="match status" value="1"/>
</dbReference>
<dbReference type="InterPro" id="IPR001907">
    <property type="entry name" value="ClpP"/>
</dbReference>
<dbReference type="InterPro" id="IPR029045">
    <property type="entry name" value="ClpP/crotonase-like_dom_sf"/>
</dbReference>
<dbReference type="InterPro" id="IPR023562">
    <property type="entry name" value="ClpP/TepA"/>
</dbReference>
<dbReference type="InterPro" id="IPR033135">
    <property type="entry name" value="ClpP_His_AS"/>
</dbReference>
<dbReference type="InterPro" id="IPR018215">
    <property type="entry name" value="ClpP_Ser_AS"/>
</dbReference>
<dbReference type="NCBIfam" id="TIGR00493">
    <property type="entry name" value="clpP"/>
    <property type="match status" value="1"/>
</dbReference>
<dbReference type="NCBIfam" id="NF001368">
    <property type="entry name" value="PRK00277.1"/>
    <property type="match status" value="1"/>
</dbReference>
<dbReference type="NCBIfam" id="NF009205">
    <property type="entry name" value="PRK12553.1"/>
    <property type="match status" value="1"/>
</dbReference>
<dbReference type="PANTHER" id="PTHR10381">
    <property type="entry name" value="ATP-DEPENDENT CLP PROTEASE PROTEOLYTIC SUBUNIT"/>
    <property type="match status" value="1"/>
</dbReference>
<dbReference type="PANTHER" id="PTHR10381:SF70">
    <property type="entry name" value="ATP-DEPENDENT CLP PROTEASE PROTEOLYTIC SUBUNIT"/>
    <property type="match status" value="1"/>
</dbReference>
<dbReference type="Pfam" id="PF00574">
    <property type="entry name" value="CLP_protease"/>
    <property type="match status" value="1"/>
</dbReference>
<dbReference type="PRINTS" id="PR00127">
    <property type="entry name" value="CLPPROTEASEP"/>
</dbReference>
<dbReference type="SUPFAM" id="SSF52096">
    <property type="entry name" value="ClpP/crotonase"/>
    <property type="match status" value="1"/>
</dbReference>
<dbReference type="PROSITE" id="PS00382">
    <property type="entry name" value="CLP_PROTEASE_HIS"/>
    <property type="match status" value="1"/>
</dbReference>
<dbReference type="PROSITE" id="PS00381">
    <property type="entry name" value="CLP_PROTEASE_SER"/>
    <property type="match status" value="1"/>
</dbReference>
<sequence length="201" mass="22150">MITNNLVPTVIEKTAGGERAFDIYSRLLKERIVFLNGEVNDHSANLVIAQLLFLESEDPDKDIYFYINSPGGMVTAGMGVYDTMQFIKPDVSTICIGLAASMGSLLLAGGAKGKRYSLPSSQIMIHQPLGGFRGQASDIEIHAKNILRIKDRLNKVLAHHTGQDLETIVKDTDRDNFMMADEAKAYGLIDHVIESREAIIK</sequence>
<feature type="chain" id="PRO_1000026093" description="ATP-dependent Clp protease proteolytic subunit">
    <location>
        <begin position="1"/>
        <end position="201"/>
    </location>
</feature>
<feature type="active site" description="Nucleophile" evidence="1">
    <location>
        <position position="101"/>
    </location>
</feature>
<feature type="active site" evidence="1">
    <location>
        <position position="126"/>
    </location>
</feature>
<comment type="function">
    <text evidence="1">Cleaves peptides in various proteins in a process that requires ATP hydrolysis. Has a chymotrypsin-like activity. Plays a major role in the degradation of misfolded proteins.</text>
</comment>
<comment type="catalytic activity">
    <reaction evidence="1">
        <text>Hydrolysis of proteins to small peptides in the presence of ATP and magnesium. alpha-casein is the usual test substrate. In the absence of ATP, only oligopeptides shorter than five residues are hydrolyzed (such as succinyl-Leu-Tyr-|-NHMec, and Leu-Tyr-Leu-|-Tyr-Trp, in which cleavage of the -Tyr-|-Leu- and -Tyr-|-Trp bonds also occurs).</text>
        <dbReference type="EC" id="3.4.21.92"/>
    </reaction>
</comment>
<comment type="subunit">
    <text evidence="1">Fourteen ClpP subunits assemble into 2 heptameric rings which stack back to back to give a disk-like structure with a central cavity, resembling the structure of eukaryotic proteasomes.</text>
</comment>
<comment type="subcellular location">
    <subcellularLocation>
        <location evidence="1">Cytoplasm</location>
    </subcellularLocation>
</comment>
<comment type="similarity">
    <text evidence="1">Belongs to the peptidase S14 family.</text>
</comment>
<gene>
    <name evidence="1" type="primary">clpP</name>
    <name type="ordered locus">FTN_1057</name>
</gene>
<evidence type="ECO:0000255" key="1">
    <source>
        <dbReference type="HAMAP-Rule" id="MF_00444"/>
    </source>
</evidence>
<keyword id="KW-0963">Cytoplasm</keyword>
<keyword id="KW-0378">Hydrolase</keyword>
<keyword id="KW-0645">Protease</keyword>
<keyword id="KW-0720">Serine protease</keyword>
<name>CLPP_FRATN</name>
<organism>
    <name type="scientific">Francisella tularensis subsp. novicida (strain U112)</name>
    <dbReference type="NCBI Taxonomy" id="401614"/>
    <lineage>
        <taxon>Bacteria</taxon>
        <taxon>Pseudomonadati</taxon>
        <taxon>Pseudomonadota</taxon>
        <taxon>Gammaproteobacteria</taxon>
        <taxon>Thiotrichales</taxon>
        <taxon>Francisellaceae</taxon>
        <taxon>Francisella</taxon>
    </lineage>
</organism>
<accession>A0Q6S9</accession>
<proteinExistence type="inferred from homology"/>
<protein>
    <recommendedName>
        <fullName evidence="1">ATP-dependent Clp protease proteolytic subunit</fullName>
        <ecNumber evidence="1">3.4.21.92</ecNumber>
    </recommendedName>
    <alternativeName>
        <fullName evidence="1">Endopeptidase Clp</fullName>
    </alternativeName>
</protein>
<reference key="1">
    <citation type="journal article" date="2007" name="Genome Biol.">
        <title>Comparison of Francisella tularensis genomes reveals evolutionary events associated with the emergence of human pathogenic strains.</title>
        <authorList>
            <person name="Rohmer L."/>
            <person name="Fong C."/>
            <person name="Abmayr S."/>
            <person name="Wasnick M."/>
            <person name="Larson Freeman T.J."/>
            <person name="Radey M."/>
            <person name="Guina T."/>
            <person name="Svensson K."/>
            <person name="Hayden H.S."/>
            <person name="Jacobs M."/>
            <person name="Gallagher L.A."/>
            <person name="Manoil C."/>
            <person name="Ernst R.K."/>
            <person name="Drees B."/>
            <person name="Buckley D."/>
            <person name="Haugen E."/>
            <person name="Bovee D."/>
            <person name="Zhou Y."/>
            <person name="Chang J."/>
            <person name="Levy R."/>
            <person name="Lim R."/>
            <person name="Gillett W."/>
            <person name="Guenthener D."/>
            <person name="Kang A."/>
            <person name="Shaffer S.A."/>
            <person name="Taylor G."/>
            <person name="Chen J."/>
            <person name="Gallis B."/>
            <person name="D'Argenio D.A."/>
            <person name="Forsman M."/>
            <person name="Olson M.V."/>
            <person name="Goodlett D.R."/>
            <person name="Kaul R."/>
            <person name="Miller S.I."/>
            <person name="Brittnacher M.J."/>
        </authorList>
    </citation>
    <scope>NUCLEOTIDE SEQUENCE [LARGE SCALE GENOMIC DNA]</scope>
    <source>
        <strain>U112</strain>
    </source>
</reference>